<keyword id="KW-0175">Coiled coil</keyword>
<keyword id="KW-1185">Reference proteome</keyword>
<feature type="chain" id="PRO_0000363891" description="Uncharacterized protein DDB_G0273453/DDB_G0273565">
    <location>
        <begin position="1"/>
        <end position="839"/>
    </location>
</feature>
<feature type="region of interest" description="Disordered" evidence="2">
    <location>
        <begin position="504"/>
        <end position="611"/>
    </location>
</feature>
<feature type="region of interest" description="Disordered" evidence="2">
    <location>
        <begin position="627"/>
        <end position="646"/>
    </location>
</feature>
<feature type="region of interest" description="Disordered" evidence="2">
    <location>
        <begin position="682"/>
        <end position="839"/>
    </location>
</feature>
<feature type="coiled-coil region" evidence="1">
    <location>
        <begin position="726"/>
        <end position="764"/>
    </location>
</feature>
<feature type="compositionally biased region" description="Low complexity" evidence="2">
    <location>
        <begin position="509"/>
        <end position="611"/>
    </location>
</feature>
<feature type="compositionally biased region" description="Basic and acidic residues" evidence="2">
    <location>
        <begin position="636"/>
        <end position="646"/>
    </location>
</feature>
<feature type="compositionally biased region" description="Low complexity" evidence="2">
    <location>
        <begin position="689"/>
        <end position="704"/>
    </location>
</feature>
<feature type="compositionally biased region" description="Low complexity" evidence="2">
    <location>
        <begin position="713"/>
        <end position="753"/>
    </location>
</feature>
<feature type="compositionally biased region" description="Basic and acidic residues" evidence="2">
    <location>
        <begin position="765"/>
        <end position="776"/>
    </location>
</feature>
<feature type="compositionally biased region" description="Acidic residues" evidence="2">
    <location>
        <begin position="809"/>
        <end position="823"/>
    </location>
</feature>
<reference key="1">
    <citation type="journal article" date="2002" name="Nature">
        <title>Sequence and analysis of chromosome 2 of Dictyostelium discoideum.</title>
        <authorList>
            <person name="Gloeckner G."/>
            <person name="Eichinger L."/>
            <person name="Szafranski K."/>
            <person name="Pachebat J.A."/>
            <person name="Bankier A.T."/>
            <person name="Dear P.H."/>
            <person name="Lehmann R."/>
            <person name="Baumgart C."/>
            <person name="Parra G."/>
            <person name="Abril J.F."/>
            <person name="Guigo R."/>
            <person name="Kumpf K."/>
            <person name="Tunggal B."/>
            <person name="Cox E.C."/>
            <person name="Quail M.A."/>
            <person name="Platzer M."/>
            <person name="Rosenthal A."/>
            <person name="Noegel A.A."/>
        </authorList>
    </citation>
    <scope>NUCLEOTIDE SEQUENCE [LARGE SCALE GENOMIC DNA]</scope>
    <source>
        <strain>AX4</strain>
    </source>
</reference>
<reference key="2">
    <citation type="journal article" date="2005" name="Nature">
        <title>The genome of the social amoeba Dictyostelium discoideum.</title>
        <authorList>
            <person name="Eichinger L."/>
            <person name="Pachebat J.A."/>
            <person name="Gloeckner G."/>
            <person name="Rajandream M.A."/>
            <person name="Sucgang R."/>
            <person name="Berriman M."/>
            <person name="Song J."/>
            <person name="Olsen R."/>
            <person name="Szafranski K."/>
            <person name="Xu Q."/>
            <person name="Tunggal B."/>
            <person name="Kummerfeld S."/>
            <person name="Madera M."/>
            <person name="Konfortov B.A."/>
            <person name="Rivero F."/>
            <person name="Bankier A.T."/>
            <person name="Lehmann R."/>
            <person name="Hamlin N."/>
            <person name="Davies R."/>
            <person name="Gaudet P."/>
            <person name="Fey P."/>
            <person name="Pilcher K."/>
            <person name="Chen G."/>
            <person name="Saunders D."/>
            <person name="Sodergren E.J."/>
            <person name="Davis P."/>
            <person name="Kerhornou A."/>
            <person name="Nie X."/>
            <person name="Hall N."/>
            <person name="Anjard C."/>
            <person name="Hemphill L."/>
            <person name="Bason N."/>
            <person name="Farbrother P."/>
            <person name="Desany B."/>
            <person name="Just E."/>
            <person name="Morio T."/>
            <person name="Rost R."/>
            <person name="Churcher C.M."/>
            <person name="Cooper J."/>
            <person name="Haydock S."/>
            <person name="van Driessche N."/>
            <person name="Cronin A."/>
            <person name="Goodhead I."/>
            <person name="Muzny D.M."/>
            <person name="Mourier T."/>
            <person name="Pain A."/>
            <person name="Lu M."/>
            <person name="Harper D."/>
            <person name="Lindsay R."/>
            <person name="Hauser H."/>
            <person name="James K.D."/>
            <person name="Quiles M."/>
            <person name="Madan Babu M."/>
            <person name="Saito T."/>
            <person name="Buchrieser C."/>
            <person name="Wardroper A."/>
            <person name="Felder M."/>
            <person name="Thangavelu M."/>
            <person name="Johnson D."/>
            <person name="Knights A."/>
            <person name="Loulseged H."/>
            <person name="Mungall K.L."/>
            <person name="Oliver K."/>
            <person name="Price C."/>
            <person name="Quail M.A."/>
            <person name="Urushihara H."/>
            <person name="Hernandez J."/>
            <person name="Rabbinowitsch E."/>
            <person name="Steffen D."/>
            <person name="Sanders M."/>
            <person name="Ma J."/>
            <person name="Kohara Y."/>
            <person name="Sharp S."/>
            <person name="Simmonds M.N."/>
            <person name="Spiegler S."/>
            <person name="Tivey A."/>
            <person name="Sugano S."/>
            <person name="White B."/>
            <person name="Walker D."/>
            <person name="Woodward J.R."/>
            <person name="Winckler T."/>
            <person name="Tanaka Y."/>
            <person name="Shaulsky G."/>
            <person name="Schleicher M."/>
            <person name="Weinstock G.M."/>
            <person name="Rosenthal A."/>
            <person name="Cox E.C."/>
            <person name="Chisholm R.L."/>
            <person name="Gibbs R.A."/>
            <person name="Loomis W.F."/>
            <person name="Platzer M."/>
            <person name="Kay R.R."/>
            <person name="Williams J.G."/>
            <person name="Dear P.H."/>
            <person name="Noegel A.A."/>
            <person name="Barrell B.G."/>
            <person name="Kuspa A."/>
        </authorList>
    </citation>
    <scope>NUCLEOTIDE SEQUENCE [LARGE SCALE GENOMIC DNA]</scope>
    <source>
        <strain>AX4</strain>
    </source>
</reference>
<sequence length="839" mass="94965">MTTTTNIINNGVSSFSLNNNSNIPTIHSPSNPIVDCIRDGTMAYIYLVDESYIQQQHQPNPKFPSLIPLPKKLYSTTPNKTTPYPFQFQQNNENLSIVKEIYNYINCFEIKDCRDFHCVDSIKRYARFHLNLTLKFMGCKSIHARQISNTVFEQLEKCRIEQNKQLTATNNNAIVTTDSITKTEQSTTTTTTTTTTTTTTTATTTTQPPIYCVSIQRNIFYYIIGHILSCYQYSKPQYIIDFPVSCEVQDKKHSFTILLGGTSGCGKSTLTALLASRIGFTAVISTDNIRQLLRKFISRQESPILWASTYHAGEIISNPSLSHKEKILQGYEAQNEMIFNKLDILIGHYEKRKESLIVEGVHLDTKLILRLVKKHPSCIPFLMYISNEAKHKERFAIRSKYMTLDPHQNKYTKYFKNIRIINDHLCHGADEHMIPQIDNTSIDRSLATIHGTIFACLKRKVQCGESYYNHETDKMNMLYNQYEQIQHQFWSSKGMLRLIQKKKTVSPHGNNNVTGDVDNNNSNSNNNNVNNNNGDNNGDSNVDNNSNDNDNNNNNSNNISNINNDNDNNNNDNDNSNVDNNNDNSDNSVNSNNSINSNNGNEGSNNCNVVNGNNSNSDILIKVEYNKNNNSSSNDNEYKNSNDNHCNIKNETENSDINGCINNNIISYNNNIKNNTDNTTGNHNYTTMNGNNENDCKNNNNNNNIKTIPNEGQQQPQQQPQQQPPQQSQQQPQLQQKKQQIQEEQQNLNNNNKSIEDDEEAFNSDDEHDHEDDSIRGNESGSVGDHGNSVKKSSLNDKNHNNGNNQSNEDNDDDSDISDSDSDGGERIDYYLDCGSLGS</sequence>
<comment type="caution">
    <text evidence="3">The gene for this protein is duplicated in strains AX3 and AX4. These strains contain a duplication of a segment of 750 kb of chromosome 2 compared to the corresponding sequence in strain AX2.</text>
</comment>
<accession>Q8T1P1</accession>
<accession>C7FZY5</accession>
<accession>Q557G9</accession>
<accession>Q557H0</accession>
<gene>
    <name type="ORF">DDB_G0273453</name>
</gene>
<gene>
    <name type="ORF">DDB_G0273565</name>
</gene>
<evidence type="ECO:0000255" key="1"/>
<evidence type="ECO:0000256" key="2">
    <source>
        <dbReference type="SAM" id="MobiDB-lite"/>
    </source>
</evidence>
<evidence type="ECO:0000305" key="3"/>
<name>Y3453_DICDI</name>
<protein>
    <recommendedName>
        <fullName>Uncharacterized protein DDB_G0273453/DDB_G0273565</fullName>
    </recommendedName>
</protein>
<organism>
    <name type="scientific">Dictyostelium discoideum</name>
    <name type="common">Social amoeba</name>
    <dbReference type="NCBI Taxonomy" id="44689"/>
    <lineage>
        <taxon>Eukaryota</taxon>
        <taxon>Amoebozoa</taxon>
        <taxon>Evosea</taxon>
        <taxon>Eumycetozoa</taxon>
        <taxon>Dictyostelia</taxon>
        <taxon>Dictyosteliales</taxon>
        <taxon>Dictyosteliaceae</taxon>
        <taxon>Dictyostelium</taxon>
    </lineage>
</organism>
<dbReference type="EMBL" id="AAFI02000010">
    <property type="protein sequence ID" value="EEU04132.1"/>
    <property type="molecule type" value="Genomic_DNA"/>
</dbReference>
<dbReference type="EMBL" id="AAFI02000010">
    <property type="protein sequence ID" value="EEU04135.1"/>
    <property type="molecule type" value="Genomic_DNA"/>
</dbReference>
<dbReference type="RefSeq" id="XP_002649184.1">
    <property type="nucleotide sequence ID" value="XM_002649138.1"/>
</dbReference>
<dbReference type="RefSeq" id="XP_002649187.1">
    <property type="nucleotide sequence ID" value="XM_002649141.1"/>
</dbReference>
<dbReference type="STRING" id="44689.Q8T1P1"/>
<dbReference type="PaxDb" id="44689-DDB0252629"/>
<dbReference type="EnsemblProtists" id="EEU04132">
    <property type="protein sequence ID" value="EEU04132"/>
    <property type="gene ID" value="DDB_G0273453"/>
</dbReference>
<dbReference type="EnsemblProtists" id="EEU04135">
    <property type="protein sequence ID" value="EEU04135"/>
    <property type="gene ID" value="DDB_G0273565"/>
</dbReference>
<dbReference type="GeneID" id="8618950"/>
<dbReference type="GeneID" id="8619027"/>
<dbReference type="KEGG" id="ddi:DDB_G0273453"/>
<dbReference type="KEGG" id="ddi:DDB_G0273565"/>
<dbReference type="dictyBase" id="DDB_G0273453"/>
<dbReference type="dictyBase" id="DDB_G0273565"/>
<dbReference type="VEuPathDB" id="AmoebaDB:DDB_G0273565"/>
<dbReference type="eggNOG" id="ENOG502QR37">
    <property type="taxonomic scope" value="Eukaryota"/>
</dbReference>
<dbReference type="HOGENOM" id="CLU_339023_0_0_1"/>
<dbReference type="InParanoid" id="Q8T1P1"/>
<dbReference type="PRO" id="PR:Q8T1P1"/>
<dbReference type="Proteomes" id="UP000002195">
    <property type="component" value="Chromosome 2"/>
</dbReference>
<dbReference type="Gene3D" id="3.40.50.300">
    <property type="entry name" value="P-loop containing nucleotide triphosphate hydrolases"/>
    <property type="match status" value="1"/>
</dbReference>
<dbReference type="InterPro" id="IPR027417">
    <property type="entry name" value="P-loop_NTPase"/>
</dbReference>
<dbReference type="PANTHER" id="PTHR33477">
    <property type="entry name" value="P-LOOP NTPASE DOMAIN-CONTAINING PROTEIN LPA1 HOMOLOG 1"/>
    <property type="match status" value="1"/>
</dbReference>
<dbReference type="PANTHER" id="PTHR33477:SF3">
    <property type="entry name" value="P-LOOP NTPASE DOMAIN-CONTAINING PROTEIN LPA1 HOMOLOG 1"/>
    <property type="match status" value="1"/>
</dbReference>
<dbReference type="SUPFAM" id="SSF52540">
    <property type="entry name" value="P-loop containing nucleoside triphosphate hydrolases"/>
    <property type="match status" value="1"/>
</dbReference>
<proteinExistence type="predicted"/>